<sequence length="167" mass="17927">MSKETIAVKAQEVEEVAEQLKSSVSAIVVDYRGLTVEQVTDLRKQLREAGVKMRVIKNKIMVRAADKAGFEDLKPVFAGPTAVAFSEEDPVAPAKILANFAKTADALQLKGGVIEGKVADLETVQEYATMPSREELLATIANLLQAPVRNVAYAVKAVAEKGDEDAA</sequence>
<keyword id="KW-1185">Reference proteome</keyword>
<keyword id="KW-0687">Ribonucleoprotein</keyword>
<keyword id="KW-0689">Ribosomal protein</keyword>
<keyword id="KW-0694">RNA-binding</keyword>
<keyword id="KW-0699">rRNA-binding</keyword>
<comment type="function">
    <text evidence="1">Forms part of the ribosomal stalk, playing a central role in the interaction of the ribosome with GTP-bound translation factors.</text>
</comment>
<comment type="subunit">
    <text evidence="1">Part of the ribosomal stalk of the 50S ribosomal subunit. The N-terminus interacts with L11 and the large rRNA to form the base of the stalk. The C-terminus forms an elongated spine to which L12 dimers bind in a sequential fashion forming a multimeric L10(L12)X complex.</text>
</comment>
<comment type="similarity">
    <text evidence="1">Belongs to the universal ribosomal protein uL10 family.</text>
</comment>
<reference key="1">
    <citation type="journal article" date="2003" name="Proc. Natl. Acad. Sci. U.S.A.">
        <title>Complete genome sequence of Lactobacillus plantarum WCFS1.</title>
        <authorList>
            <person name="Kleerebezem M."/>
            <person name="Boekhorst J."/>
            <person name="van Kranenburg R."/>
            <person name="Molenaar D."/>
            <person name="Kuipers O.P."/>
            <person name="Leer R."/>
            <person name="Tarchini R."/>
            <person name="Peters S.A."/>
            <person name="Sandbrink H.M."/>
            <person name="Fiers M.W.E.J."/>
            <person name="Stiekema W."/>
            <person name="Klein Lankhorst R.M."/>
            <person name="Bron P.A."/>
            <person name="Hoffer S.M."/>
            <person name="Nierop Groot M.N."/>
            <person name="Kerkhoven R."/>
            <person name="De Vries M."/>
            <person name="Ursing B."/>
            <person name="De Vos W.M."/>
            <person name="Siezen R.J."/>
        </authorList>
    </citation>
    <scope>NUCLEOTIDE SEQUENCE [LARGE SCALE GENOMIC DNA]</scope>
    <source>
        <strain>ATCC BAA-793 / NCIMB 8826 / WCFS1</strain>
    </source>
</reference>
<reference key="2">
    <citation type="journal article" date="2012" name="J. Bacteriol.">
        <title>Complete resequencing and reannotation of the Lactobacillus plantarum WCFS1 genome.</title>
        <authorList>
            <person name="Siezen R.J."/>
            <person name="Francke C."/>
            <person name="Renckens B."/>
            <person name="Boekhorst J."/>
            <person name="Wels M."/>
            <person name="Kleerebezem M."/>
            <person name="van Hijum S.A."/>
        </authorList>
    </citation>
    <scope>NUCLEOTIDE SEQUENCE [LARGE SCALE GENOMIC DNA]</scope>
    <scope>GENOME REANNOTATION</scope>
    <source>
        <strain>ATCC BAA-793 / NCIMB 8826 / WCFS1</strain>
    </source>
</reference>
<organism>
    <name type="scientific">Lactiplantibacillus plantarum (strain ATCC BAA-793 / NCIMB 8826 / WCFS1)</name>
    <name type="common">Lactobacillus plantarum</name>
    <dbReference type="NCBI Taxonomy" id="220668"/>
    <lineage>
        <taxon>Bacteria</taxon>
        <taxon>Bacillati</taxon>
        <taxon>Bacillota</taxon>
        <taxon>Bacilli</taxon>
        <taxon>Lactobacillales</taxon>
        <taxon>Lactobacillaceae</taxon>
        <taxon>Lactiplantibacillus</taxon>
    </lineage>
</organism>
<accession>Q88YW8</accession>
<accession>F9UL86</accession>
<gene>
    <name evidence="1" type="primary">rplJ</name>
    <name type="ordered locus">lp_0621</name>
</gene>
<protein>
    <recommendedName>
        <fullName evidence="1">Large ribosomal subunit protein uL10</fullName>
    </recommendedName>
    <alternativeName>
        <fullName evidence="2">50S ribosomal protein L10</fullName>
    </alternativeName>
</protein>
<evidence type="ECO:0000255" key="1">
    <source>
        <dbReference type="HAMAP-Rule" id="MF_00362"/>
    </source>
</evidence>
<evidence type="ECO:0000305" key="2"/>
<dbReference type="EMBL" id="AL935263">
    <property type="protein sequence ID" value="CCC78101.1"/>
    <property type="molecule type" value="Genomic_DNA"/>
</dbReference>
<dbReference type="RefSeq" id="WP_003643933.1">
    <property type="nucleotide sequence ID" value="NC_004567.2"/>
</dbReference>
<dbReference type="RefSeq" id="YP_004888615.1">
    <property type="nucleotide sequence ID" value="NC_004567.2"/>
</dbReference>
<dbReference type="SMR" id="Q88YW8"/>
<dbReference type="STRING" id="220668.lp_0621"/>
<dbReference type="EnsemblBacteria" id="CCC78101">
    <property type="protein sequence ID" value="CCC78101"/>
    <property type="gene ID" value="lp_0621"/>
</dbReference>
<dbReference type="GeneID" id="89668262"/>
<dbReference type="KEGG" id="lpl:lp_0621"/>
<dbReference type="PATRIC" id="fig|220668.9.peg.521"/>
<dbReference type="eggNOG" id="COG0244">
    <property type="taxonomic scope" value="Bacteria"/>
</dbReference>
<dbReference type="HOGENOM" id="CLU_092227_2_0_9"/>
<dbReference type="OrthoDB" id="9808307at2"/>
<dbReference type="PhylomeDB" id="Q88YW8"/>
<dbReference type="Proteomes" id="UP000000432">
    <property type="component" value="Chromosome"/>
</dbReference>
<dbReference type="GO" id="GO:0015934">
    <property type="term" value="C:large ribosomal subunit"/>
    <property type="evidence" value="ECO:0007669"/>
    <property type="project" value="InterPro"/>
</dbReference>
<dbReference type="GO" id="GO:0070180">
    <property type="term" value="F:large ribosomal subunit rRNA binding"/>
    <property type="evidence" value="ECO:0007669"/>
    <property type="project" value="UniProtKB-UniRule"/>
</dbReference>
<dbReference type="GO" id="GO:0003735">
    <property type="term" value="F:structural constituent of ribosome"/>
    <property type="evidence" value="ECO:0007669"/>
    <property type="project" value="InterPro"/>
</dbReference>
<dbReference type="GO" id="GO:0006412">
    <property type="term" value="P:translation"/>
    <property type="evidence" value="ECO:0007669"/>
    <property type="project" value="UniProtKB-UniRule"/>
</dbReference>
<dbReference type="CDD" id="cd05797">
    <property type="entry name" value="Ribosomal_L10"/>
    <property type="match status" value="1"/>
</dbReference>
<dbReference type="Gene3D" id="3.30.70.1730">
    <property type="match status" value="1"/>
</dbReference>
<dbReference type="Gene3D" id="6.10.250.290">
    <property type="match status" value="1"/>
</dbReference>
<dbReference type="HAMAP" id="MF_00362">
    <property type="entry name" value="Ribosomal_uL10"/>
    <property type="match status" value="1"/>
</dbReference>
<dbReference type="InterPro" id="IPR001790">
    <property type="entry name" value="Ribosomal_uL10"/>
</dbReference>
<dbReference type="InterPro" id="IPR043141">
    <property type="entry name" value="Ribosomal_uL10-like_sf"/>
</dbReference>
<dbReference type="InterPro" id="IPR022973">
    <property type="entry name" value="Ribosomal_uL10_bac"/>
</dbReference>
<dbReference type="InterPro" id="IPR047865">
    <property type="entry name" value="Ribosomal_uL10_bac_type"/>
</dbReference>
<dbReference type="InterPro" id="IPR002363">
    <property type="entry name" value="Ribosomal_uL10_CS_bac"/>
</dbReference>
<dbReference type="NCBIfam" id="NF000955">
    <property type="entry name" value="PRK00099.1-1"/>
    <property type="match status" value="1"/>
</dbReference>
<dbReference type="PANTHER" id="PTHR11560">
    <property type="entry name" value="39S RIBOSOMAL PROTEIN L10, MITOCHONDRIAL"/>
    <property type="match status" value="1"/>
</dbReference>
<dbReference type="Pfam" id="PF00466">
    <property type="entry name" value="Ribosomal_L10"/>
    <property type="match status" value="1"/>
</dbReference>
<dbReference type="SUPFAM" id="SSF160369">
    <property type="entry name" value="Ribosomal protein L10-like"/>
    <property type="match status" value="1"/>
</dbReference>
<dbReference type="PROSITE" id="PS01109">
    <property type="entry name" value="RIBOSOMAL_L10"/>
    <property type="match status" value="1"/>
</dbReference>
<proteinExistence type="inferred from homology"/>
<feature type="chain" id="PRO_0000154647" description="Large ribosomal subunit protein uL10">
    <location>
        <begin position="1"/>
        <end position="167"/>
    </location>
</feature>
<name>RL10_LACPL</name>